<comment type="function">
    <text evidence="1">Catalyzes the conversion of D-ribulose 5-phosphate to formate and 3,4-dihydroxy-2-butanone 4-phosphate.</text>
</comment>
<comment type="catalytic activity">
    <reaction evidence="1">
        <text>D-ribulose 5-phosphate = (2S)-2-hydroxy-3-oxobutyl phosphate + formate + H(+)</text>
        <dbReference type="Rhea" id="RHEA:18457"/>
        <dbReference type="ChEBI" id="CHEBI:15378"/>
        <dbReference type="ChEBI" id="CHEBI:15740"/>
        <dbReference type="ChEBI" id="CHEBI:58121"/>
        <dbReference type="ChEBI" id="CHEBI:58830"/>
        <dbReference type="EC" id="4.1.99.12"/>
    </reaction>
</comment>
<comment type="cofactor">
    <cofactor evidence="1">
        <name>Mg(2+)</name>
        <dbReference type="ChEBI" id="CHEBI:18420"/>
    </cofactor>
    <cofactor evidence="1">
        <name>Mn(2+)</name>
        <dbReference type="ChEBI" id="CHEBI:29035"/>
    </cofactor>
    <text evidence="1">Binds 2 divalent metal cations per subunit. Magnesium or manganese.</text>
</comment>
<comment type="pathway">
    <text evidence="1">Cofactor biosynthesis; riboflavin biosynthesis; 2-hydroxy-3-oxobutyl phosphate from D-ribulose 5-phosphate: step 1/1.</text>
</comment>
<comment type="subunit">
    <text evidence="1">Homodimer.</text>
</comment>
<comment type="similarity">
    <text evidence="1">Belongs to the DHBP synthase family.</text>
</comment>
<protein>
    <recommendedName>
        <fullName evidence="1">3,4-dihydroxy-2-butanone 4-phosphate synthase</fullName>
        <shortName evidence="1">DHBP synthase</shortName>
        <ecNumber evidence="1">4.1.99.12</ecNumber>
    </recommendedName>
</protein>
<dbReference type="EC" id="4.1.99.12" evidence="1"/>
<dbReference type="EMBL" id="AE006468">
    <property type="protein sequence ID" value="AAL22069.1"/>
    <property type="molecule type" value="Genomic_DNA"/>
</dbReference>
<dbReference type="RefSeq" id="NP_462110.1">
    <property type="nucleotide sequence ID" value="NC_003197.2"/>
</dbReference>
<dbReference type="RefSeq" id="WP_001076978.1">
    <property type="nucleotide sequence ID" value="NC_003197.2"/>
</dbReference>
<dbReference type="PDB" id="3LQU">
    <property type="method" value="X-ray"/>
    <property type="resolution" value="2.52 A"/>
    <property type="chains" value="A/B=1-217"/>
</dbReference>
<dbReference type="PDB" id="3LRJ">
    <property type="method" value="X-ray"/>
    <property type="resolution" value="2.80 A"/>
    <property type="chains" value="A/B/C/D=1-217"/>
</dbReference>
<dbReference type="PDB" id="3LS6">
    <property type="method" value="X-ray"/>
    <property type="resolution" value="1.86 A"/>
    <property type="chains" value="A/B=1-217"/>
</dbReference>
<dbReference type="PDBsum" id="3LQU"/>
<dbReference type="PDBsum" id="3LRJ"/>
<dbReference type="PDBsum" id="3LS6"/>
<dbReference type="SMR" id="P66032"/>
<dbReference type="STRING" id="99287.STM3195"/>
<dbReference type="PaxDb" id="99287-STM3195"/>
<dbReference type="GeneID" id="1254718"/>
<dbReference type="KEGG" id="stm:STM3195"/>
<dbReference type="PATRIC" id="fig|99287.12.peg.3389"/>
<dbReference type="HOGENOM" id="CLU_020273_3_0_6"/>
<dbReference type="OMA" id="DAGGLIC"/>
<dbReference type="PhylomeDB" id="P66032"/>
<dbReference type="BioCyc" id="SENT99287:STM3195-MONOMER"/>
<dbReference type="BRENDA" id="4.1.99.12">
    <property type="organism ID" value="5542"/>
</dbReference>
<dbReference type="UniPathway" id="UPA00275">
    <property type="reaction ID" value="UER00399"/>
</dbReference>
<dbReference type="EvolutionaryTrace" id="P66032"/>
<dbReference type="Proteomes" id="UP000001014">
    <property type="component" value="Chromosome"/>
</dbReference>
<dbReference type="GO" id="GO:0005829">
    <property type="term" value="C:cytosol"/>
    <property type="evidence" value="ECO:0000318"/>
    <property type="project" value="GO_Central"/>
</dbReference>
<dbReference type="GO" id="GO:0008686">
    <property type="term" value="F:3,4-dihydroxy-2-butanone-4-phosphate synthase activity"/>
    <property type="evidence" value="ECO:0000318"/>
    <property type="project" value="GO_Central"/>
</dbReference>
<dbReference type="GO" id="GO:0000287">
    <property type="term" value="F:magnesium ion binding"/>
    <property type="evidence" value="ECO:0007669"/>
    <property type="project" value="UniProtKB-UniRule"/>
</dbReference>
<dbReference type="GO" id="GO:0030145">
    <property type="term" value="F:manganese ion binding"/>
    <property type="evidence" value="ECO:0007669"/>
    <property type="project" value="UniProtKB-UniRule"/>
</dbReference>
<dbReference type="GO" id="GO:0009231">
    <property type="term" value="P:riboflavin biosynthetic process"/>
    <property type="evidence" value="ECO:0000318"/>
    <property type="project" value="GO_Central"/>
</dbReference>
<dbReference type="FunFam" id="3.90.870.10:FF:000002">
    <property type="entry name" value="3,4-dihydroxy-2-butanone 4-phosphate synthase"/>
    <property type="match status" value="1"/>
</dbReference>
<dbReference type="Gene3D" id="3.90.870.10">
    <property type="entry name" value="DHBP synthase"/>
    <property type="match status" value="1"/>
</dbReference>
<dbReference type="HAMAP" id="MF_00180">
    <property type="entry name" value="RibB"/>
    <property type="match status" value="1"/>
</dbReference>
<dbReference type="InterPro" id="IPR017945">
    <property type="entry name" value="DHBP_synth_RibB-like_a/b_dom"/>
</dbReference>
<dbReference type="InterPro" id="IPR000422">
    <property type="entry name" value="DHBP_synthase_RibB"/>
</dbReference>
<dbReference type="NCBIfam" id="TIGR00506">
    <property type="entry name" value="ribB"/>
    <property type="match status" value="1"/>
</dbReference>
<dbReference type="PANTHER" id="PTHR21327:SF38">
    <property type="entry name" value="3,4-DIHYDROXY-2-BUTANONE 4-PHOSPHATE SYNTHASE"/>
    <property type="match status" value="1"/>
</dbReference>
<dbReference type="PANTHER" id="PTHR21327">
    <property type="entry name" value="GTP CYCLOHYDROLASE II-RELATED"/>
    <property type="match status" value="1"/>
</dbReference>
<dbReference type="Pfam" id="PF00926">
    <property type="entry name" value="DHBP_synthase"/>
    <property type="match status" value="1"/>
</dbReference>
<dbReference type="SUPFAM" id="SSF55821">
    <property type="entry name" value="YrdC/RibB"/>
    <property type="match status" value="1"/>
</dbReference>
<reference key="1">
    <citation type="journal article" date="2001" name="Nature">
        <title>Complete genome sequence of Salmonella enterica serovar Typhimurium LT2.</title>
        <authorList>
            <person name="McClelland M."/>
            <person name="Sanderson K.E."/>
            <person name="Spieth J."/>
            <person name="Clifton S.W."/>
            <person name="Latreille P."/>
            <person name="Courtney L."/>
            <person name="Porwollik S."/>
            <person name="Ali J."/>
            <person name="Dante M."/>
            <person name="Du F."/>
            <person name="Hou S."/>
            <person name="Layman D."/>
            <person name="Leonard S."/>
            <person name="Nguyen C."/>
            <person name="Scott K."/>
            <person name="Holmes A."/>
            <person name="Grewal N."/>
            <person name="Mulvaney E."/>
            <person name="Ryan E."/>
            <person name="Sun H."/>
            <person name="Florea L."/>
            <person name="Miller W."/>
            <person name="Stoneking T."/>
            <person name="Nhan M."/>
            <person name="Waterston R."/>
            <person name="Wilson R.K."/>
        </authorList>
    </citation>
    <scope>NUCLEOTIDE SEQUENCE [LARGE SCALE GENOMIC DNA]</scope>
    <source>
        <strain>LT2 / SGSC1412 / ATCC 700720</strain>
    </source>
</reference>
<evidence type="ECO:0000255" key="1">
    <source>
        <dbReference type="HAMAP-Rule" id="MF_00180"/>
    </source>
</evidence>
<evidence type="ECO:0007829" key="2">
    <source>
        <dbReference type="PDB" id="3LS6"/>
    </source>
</evidence>
<accession>P66032</accession>
<accession>Q8XES0</accession>
<proteinExistence type="evidence at protein level"/>
<organism>
    <name type="scientific">Salmonella typhimurium (strain LT2 / SGSC1412 / ATCC 700720)</name>
    <dbReference type="NCBI Taxonomy" id="99287"/>
    <lineage>
        <taxon>Bacteria</taxon>
        <taxon>Pseudomonadati</taxon>
        <taxon>Pseudomonadota</taxon>
        <taxon>Gammaproteobacteria</taxon>
        <taxon>Enterobacterales</taxon>
        <taxon>Enterobacteriaceae</taxon>
        <taxon>Salmonella</taxon>
    </lineage>
</organism>
<feature type="chain" id="PRO_0000151810" description="3,4-dihydroxy-2-butanone 4-phosphate synthase">
    <location>
        <begin position="1"/>
        <end position="217"/>
    </location>
</feature>
<feature type="binding site" evidence="1">
    <location>
        <begin position="37"/>
        <end position="38"/>
    </location>
    <ligand>
        <name>D-ribulose 5-phosphate</name>
        <dbReference type="ChEBI" id="CHEBI:58121"/>
    </ligand>
</feature>
<feature type="binding site" evidence="1">
    <location>
        <position position="38"/>
    </location>
    <ligand>
        <name>Mg(2+)</name>
        <dbReference type="ChEBI" id="CHEBI:18420"/>
        <label>1</label>
    </ligand>
</feature>
<feature type="binding site" evidence="1">
    <location>
        <position position="38"/>
    </location>
    <ligand>
        <name>Mg(2+)</name>
        <dbReference type="ChEBI" id="CHEBI:18420"/>
        <label>2</label>
    </ligand>
</feature>
<feature type="binding site" evidence="1">
    <location>
        <position position="42"/>
    </location>
    <ligand>
        <name>D-ribulose 5-phosphate</name>
        <dbReference type="ChEBI" id="CHEBI:58121"/>
    </ligand>
</feature>
<feature type="binding site" evidence="1">
    <location>
        <begin position="150"/>
        <end position="154"/>
    </location>
    <ligand>
        <name>D-ribulose 5-phosphate</name>
        <dbReference type="ChEBI" id="CHEBI:58121"/>
    </ligand>
</feature>
<feature type="binding site" evidence="1">
    <location>
        <position position="153"/>
    </location>
    <ligand>
        <name>Mg(2+)</name>
        <dbReference type="ChEBI" id="CHEBI:18420"/>
        <label>2</label>
    </ligand>
</feature>
<feature type="binding site" evidence="1">
    <location>
        <position position="174"/>
    </location>
    <ligand>
        <name>D-ribulose 5-phosphate</name>
        <dbReference type="ChEBI" id="CHEBI:58121"/>
    </ligand>
</feature>
<feature type="site" description="Essential for catalytic activity" evidence="1">
    <location>
        <position position="136"/>
    </location>
</feature>
<feature type="site" description="Essential for catalytic activity" evidence="1">
    <location>
        <position position="174"/>
    </location>
</feature>
<feature type="helix" evidence="2">
    <location>
        <begin position="12"/>
        <end position="24"/>
    </location>
</feature>
<feature type="strand" evidence="2">
    <location>
        <begin position="29"/>
        <end position="32"/>
    </location>
</feature>
<feature type="turn" evidence="2">
    <location>
        <begin position="35"/>
        <end position="38"/>
    </location>
</feature>
<feature type="strand" evidence="2">
    <location>
        <begin position="41"/>
        <end position="46"/>
    </location>
</feature>
<feature type="turn" evidence="2">
    <location>
        <begin position="47"/>
        <end position="49"/>
    </location>
</feature>
<feature type="helix" evidence="2">
    <location>
        <begin position="52"/>
        <end position="61"/>
    </location>
</feature>
<feature type="strand" evidence="2">
    <location>
        <begin position="67"/>
        <end position="70"/>
    </location>
</feature>
<feature type="helix" evidence="2">
    <location>
        <begin position="72"/>
        <end position="77"/>
    </location>
</feature>
<feature type="strand" evidence="2">
    <location>
        <begin position="99"/>
        <end position="104"/>
    </location>
</feature>
<feature type="strand" evidence="2">
    <location>
        <begin position="106"/>
        <end position="108"/>
    </location>
</feature>
<feature type="helix" evidence="2">
    <location>
        <begin position="111"/>
        <end position="122"/>
    </location>
</feature>
<feature type="helix" evidence="2">
    <location>
        <begin position="128"/>
        <end position="130"/>
    </location>
</feature>
<feature type="strand" evidence="2">
    <location>
        <begin position="131"/>
        <end position="141"/>
    </location>
</feature>
<feature type="helix" evidence="2">
    <location>
        <begin position="146"/>
        <end position="148"/>
    </location>
</feature>
<feature type="helix" evidence="2">
    <location>
        <begin position="153"/>
        <end position="164"/>
    </location>
</feature>
<feature type="strand" evidence="2">
    <location>
        <begin position="170"/>
        <end position="176"/>
    </location>
</feature>
<feature type="strand" evidence="2">
    <location>
        <begin position="180"/>
        <end position="182"/>
    </location>
</feature>
<feature type="helix" evidence="2">
    <location>
        <begin position="185"/>
        <end position="194"/>
    </location>
</feature>
<feature type="strand" evidence="2">
    <location>
        <begin position="198"/>
        <end position="201"/>
    </location>
</feature>
<feature type="helix" evidence="2">
    <location>
        <begin position="202"/>
        <end position="210"/>
    </location>
</feature>
<name>RIBB_SALTY</name>
<keyword id="KW-0002">3D-structure</keyword>
<keyword id="KW-0456">Lyase</keyword>
<keyword id="KW-0460">Magnesium</keyword>
<keyword id="KW-0464">Manganese</keyword>
<keyword id="KW-0479">Metal-binding</keyword>
<keyword id="KW-1185">Reference proteome</keyword>
<keyword id="KW-0686">Riboflavin biosynthesis</keyword>
<sequence>MNQTLLSSFGTPFERVELALDALREGRGVMVLDDEDRENEGDMIFPAETMTVEQMALTIRHGSGIVCLCITEDRRKQLDLPMMVENNTSAYGTGFTVTIEAAEGVTTGVSAADRVTTVRAAIKDGAKPSDLNRPGHVFPLRAQAGGVLTRGGHTEATIDLMTLAGFKPAGVLCELTNDDGTMARAPECIAFAGQHNMAVVTIEDLVAYRQAHERKAS</sequence>
<gene>
    <name evidence="1" type="primary">ribB</name>
    <name type="ordered locus">STM3195</name>
</gene>